<accession>Q723X5</accession>
<gene>
    <name type="primary">inlI</name>
    <name type="ordered locus">LMOf2365_0350</name>
</gene>
<protein>
    <recommendedName>
        <fullName>Internalin I</fullName>
    </recommendedName>
</protein>
<evidence type="ECO:0000250" key="1">
    <source>
        <dbReference type="UniProtKB" id="Q8YA32"/>
    </source>
</evidence>
<evidence type="ECO:0000255" key="2"/>
<evidence type="ECO:0000255" key="3">
    <source>
        <dbReference type="PROSITE-ProRule" id="PRU00477"/>
    </source>
</evidence>
<evidence type="ECO:0000256" key="4">
    <source>
        <dbReference type="SAM" id="MobiDB-lite"/>
    </source>
</evidence>
<evidence type="ECO:0000305" key="5"/>
<dbReference type="EMBL" id="AE017262">
    <property type="protein sequence ID" value="AAT03136.1"/>
    <property type="molecule type" value="Genomic_DNA"/>
</dbReference>
<dbReference type="RefSeq" id="WP_003724263.1">
    <property type="nucleotide sequence ID" value="NC_002973.6"/>
</dbReference>
<dbReference type="SMR" id="Q723X5"/>
<dbReference type="KEGG" id="lmf:LMOf2365_0350"/>
<dbReference type="HOGENOM" id="CLU_241292_0_0_9"/>
<dbReference type="GO" id="GO:0005576">
    <property type="term" value="C:extracellular region"/>
    <property type="evidence" value="ECO:0007669"/>
    <property type="project" value="UniProtKB-KW"/>
</dbReference>
<dbReference type="Gene3D" id="2.60.40.1220">
    <property type="match status" value="1"/>
</dbReference>
<dbReference type="Gene3D" id="2.60.40.10">
    <property type="entry name" value="Immunoglobulins"/>
    <property type="match status" value="8"/>
</dbReference>
<dbReference type="Gene3D" id="3.10.20.320">
    <property type="entry name" value="Putative peptidoglycan bound protein (lpxtg motif)"/>
    <property type="match status" value="3"/>
</dbReference>
<dbReference type="Gene3D" id="3.80.10.10">
    <property type="entry name" value="Ribonuclease Inhibitor"/>
    <property type="match status" value="4"/>
</dbReference>
<dbReference type="InterPro" id="IPR014755">
    <property type="entry name" value="Cu-Rt/internalin_Ig-like"/>
</dbReference>
<dbReference type="InterPro" id="IPR013783">
    <property type="entry name" value="Ig-like_fold"/>
</dbReference>
<dbReference type="InterPro" id="IPR014756">
    <property type="entry name" value="Ig_E-set"/>
</dbReference>
<dbReference type="InterPro" id="IPR012569">
    <property type="entry name" value="Inl_IR"/>
</dbReference>
<dbReference type="InterPro" id="IPR044056">
    <property type="entry name" value="InlI_Ig-like"/>
</dbReference>
<dbReference type="InterPro" id="IPR001611">
    <property type="entry name" value="Leu-rich_rpt"/>
</dbReference>
<dbReference type="InterPro" id="IPR025875">
    <property type="entry name" value="Leu-rich_rpt_4"/>
</dbReference>
<dbReference type="InterPro" id="IPR003591">
    <property type="entry name" value="Leu-rich_rpt_typical-subtyp"/>
</dbReference>
<dbReference type="InterPro" id="IPR019931">
    <property type="entry name" value="LPXTG_anchor"/>
</dbReference>
<dbReference type="InterPro" id="IPR032675">
    <property type="entry name" value="LRR_dom_sf"/>
</dbReference>
<dbReference type="InterPro" id="IPR055414">
    <property type="entry name" value="LRR_R13L4/SHOC2-like"/>
</dbReference>
<dbReference type="InterPro" id="IPR009459">
    <property type="entry name" value="MucBP_dom"/>
</dbReference>
<dbReference type="InterPro" id="IPR035986">
    <property type="entry name" value="PKD_dom_sf"/>
</dbReference>
<dbReference type="InterPro" id="IPR050836">
    <property type="entry name" value="SDS22/Internalin_LRR"/>
</dbReference>
<dbReference type="NCBIfam" id="NF033932">
    <property type="entry name" value="LapB_rpt_80"/>
    <property type="match status" value="8"/>
</dbReference>
<dbReference type="NCBIfam" id="TIGR01167">
    <property type="entry name" value="LPXTG_anchor"/>
    <property type="match status" value="1"/>
</dbReference>
<dbReference type="PANTHER" id="PTHR46652">
    <property type="entry name" value="LEUCINE-RICH REPEAT AND IQ DOMAIN-CONTAINING PROTEIN 1-RELATED"/>
    <property type="match status" value="1"/>
</dbReference>
<dbReference type="PANTHER" id="PTHR46652:SF3">
    <property type="entry name" value="LEUCINE-RICH REPEAT-CONTAINING PROTEIN 9"/>
    <property type="match status" value="1"/>
</dbReference>
<dbReference type="Pfam" id="PF18981">
    <property type="entry name" value="InlK_D3"/>
    <property type="match status" value="8"/>
</dbReference>
<dbReference type="Pfam" id="PF23598">
    <property type="entry name" value="LRR_14"/>
    <property type="match status" value="1"/>
</dbReference>
<dbReference type="Pfam" id="PF12799">
    <property type="entry name" value="LRR_4"/>
    <property type="match status" value="1"/>
</dbReference>
<dbReference type="Pfam" id="PF08191">
    <property type="entry name" value="LRR_adjacent"/>
    <property type="match status" value="1"/>
</dbReference>
<dbReference type="Pfam" id="PF06458">
    <property type="entry name" value="MucBP"/>
    <property type="match status" value="3"/>
</dbReference>
<dbReference type="SMART" id="SM00364">
    <property type="entry name" value="LRR_BAC"/>
    <property type="match status" value="14"/>
</dbReference>
<dbReference type="SMART" id="SM00365">
    <property type="entry name" value="LRR_SD22"/>
    <property type="match status" value="13"/>
</dbReference>
<dbReference type="SMART" id="SM00369">
    <property type="entry name" value="LRR_TYP"/>
    <property type="match status" value="11"/>
</dbReference>
<dbReference type="SUPFAM" id="SSF81296">
    <property type="entry name" value="E set domains"/>
    <property type="match status" value="1"/>
</dbReference>
<dbReference type="SUPFAM" id="SSF52058">
    <property type="entry name" value="L domain-like"/>
    <property type="match status" value="3"/>
</dbReference>
<dbReference type="SUPFAM" id="SSF49299">
    <property type="entry name" value="PKD domain"/>
    <property type="match status" value="1"/>
</dbReference>
<dbReference type="PROSITE" id="PS50847">
    <property type="entry name" value="GRAM_POS_ANCHORING"/>
    <property type="match status" value="1"/>
</dbReference>
<dbReference type="PROSITE" id="PS51450">
    <property type="entry name" value="LRR"/>
    <property type="match status" value="23"/>
</dbReference>
<comment type="function">
    <text evidence="1">A role in virulence could not be demonstrated.</text>
</comment>
<comment type="subcellular location">
    <subcellularLocation>
        <location evidence="3">Secreted</location>
        <location evidence="3">Cell wall</location>
        <topology evidence="3">Peptidoglycan-anchor</topology>
    </subcellularLocation>
</comment>
<comment type="similarity">
    <text evidence="5">Belongs to the internalin family.</text>
</comment>
<reference key="1">
    <citation type="journal article" date="2004" name="Nucleic Acids Res.">
        <title>Whole genome comparisons of serotype 4b and 1/2a strains of the food-borne pathogen Listeria monocytogenes reveal new insights into the core genome components of this species.</title>
        <authorList>
            <person name="Nelson K.E."/>
            <person name="Fouts D.E."/>
            <person name="Mongodin E.F."/>
            <person name="Ravel J."/>
            <person name="DeBoy R.T."/>
            <person name="Kolonay J.F."/>
            <person name="Rasko D.A."/>
            <person name="Angiuoli S.V."/>
            <person name="Gill S.R."/>
            <person name="Paulsen I.T."/>
            <person name="Peterson J.D."/>
            <person name="White O."/>
            <person name="Nelson W.C."/>
            <person name="Nierman W.C."/>
            <person name="Beanan M.J."/>
            <person name="Brinkac L.M."/>
            <person name="Daugherty S.C."/>
            <person name="Dodson R.J."/>
            <person name="Durkin A.S."/>
            <person name="Madupu R."/>
            <person name="Haft D.H."/>
            <person name="Selengut J."/>
            <person name="Van Aken S.E."/>
            <person name="Khouri H.M."/>
            <person name="Fedorova N."/>
            <person name="Forberger H.A."/>
            <person name="Tran B."/>
            <person name="Kathariou S."/>
            <person name="Wonderling L.D."/>
            <person name="Uhlich G.A."/>
            <person name="Bayles D.O."/>
            <person name="Luchansky J.B."/>
            <person name="Fraser C.M."/>
        </authorList>
    </citation>
    <scope>NUCLEOTIDE SEQUENCE [LARGE SCALE GENOMIC DNA]</scope>
    <source>
        <strain>F2365</strain>
    </source>
</reference>
<feature type="signal peptide" evidence="2">
    <location>
        <begin position="1"/>
        <end position="28"/>
    </location>
</feature>
<feature type="chain" id="PRO_0000252673" description="Internalin I">
    <location>
        <begin position="29"/>
        <end position="1743"/>
    </location>
</feature>
<feature type="propeptide" id="PRO_0000252674" description="Removed by sortase" evidence="3">
    <location>
        <begin position="1744"/>
        <end position="1775"/>
    </location>
</feature>
<feature type="repeat" description="LRR 1">
    <location>
        <begin position="152"/>
        <end position="176"/>
    </location>
</feature>
<feature type="repeat" description="LRR 2">
    <location>
        <begin position="180"/>
        <end position="201"/>
    </location>
</feature>
<feature type="repeat" description="LRR 3">
    <location>
        <begin position="202"/>
        <end position="224"/>
    </location>
</feature>
<feature type="repeat" description="LRR 4">
    <location>
        <begin position="225"/>
        <end position="247"/>
    </location>
</feature>
<feature type="repeat" description="LRR 5">
    <location>
        <begin position="248"/>
        <end position="269"/>
    </location>
</feature>
<feature type="repeat" description="LRR 6">
    <location>
        <begin position="274"/>
        <end position="295"/>
    </location>
</feature>
<feature type="repeat" description="LRR 7">
    <location>
        <begin position="296"/>
        <end position="318"/>
    </location>
</feature>
<feature type="repeat" description="LRR 8">
    <location>
        <begin position="319"/>
        <end position="341"/>
    </location>
</feature>
<feature type="repeat" description="LRR 9">
    <location>
        <begin position="342"/>
        <end position="364"/>
    </location>
</feature>
<feature type="repeat" description="LRR 10">
    <location>
        <begin position="365"/>
        <end position="386"/>
    </location>
</feature>
<feature type="repeat" description="LRR 11">
    <location>
        <begin position="387"/>
        <end position="409"/>
    </location>
</feature>
<feature type="repeat" description="LRR 12">
    <location>
        <begin position="410"/>
        <end position="431"/>
    </location>
</feature>
<feature type="repeat" description="LRR 13">
    <location>
        <begin position="432"/>
        <end position="453"/>
    </location>
</feature>
<feature type="repeat" description="LRR 14">
    <location>
        <begin position="454"/>
        <end position="475"/>
    </location>
</feature>
<feature type="repeat" description="LRR 15">
    <location>
        <begin position="476"/>
        <end position="497"/>
    </location>
</feature>
<feature type="repeat" description="LRR 16">
    <location>
        <begin position="498"/>
        <end position="519"/>
    </location>
</feature>
<feature type="repeat" description="LRR 17">
    <location>
        <begin position="520"/>
        <end position="541"/>
    </location>
</feature>
<feature type="repeat" description="LRR 18">
    <location>
        <begin position="542"/>
        <end position="563"/>
    </location>
</feature>
<feature type="repeat" description="LRR 19">
    <location>
        <begin position="564"/>
        <end position="585"/>
    </location>
</feature>
<feature type="repeat" description="LRR 20">
    <location>
        <begin position="586"/>
        <end position="607"/>
    </location>
</feature>
<feature type="repeat" description="LRR 21">
    <location>
        <begin position="608"/>
        <end position="629"/>
    </location>
</feature>
<feature type="repeat" description="LRR 22">
    <location>
        <begin position="630"/>
        <end position="650"/>
    </location>
</feature>
<feature type="repeat" description="LRR 23">
    <location>
        <begin position="654"/>
        <end position="675"/>
    </location>
</feature>
<feature type="repeat" description="LRR 24">
    <location>
        <begin position="682"/>
        <end position="704"/>
    </location>
</feature>
<feature type="repeat" description="LRR 25">
    <location>
        <begin position="705"/>
        <end position="726"/>
    </location>
</feature>
<feature type="repeat" description="LRR 26">
    <location>
        <begin position="727"/>
        <end position="748"/>
    </location>
</feature>
<feature type="repeat" description="LRR 27">
    <location>
        <begin position="749"/>
        <end position="770"/>
    </location>
</feature>
<feature type="domain" description="LRRCT">
    <location>
        <begin position="782"/>
        <end position="869"/>
    </location>
</feature>
<feature type="domain" description="MucBP 1">
    <location>
        <begin position="1507"/>
        <end position="1566"/>
    </location>
</feature>
<feature type="domain" description="MucBP 2">
    <location>
        <begin position="1572"/>
        <end position="1631"/>
    </location>
</feature>
<feature type="domain" description="MucBP 3">
    <location>
        <begin position="1641"/>
        <end position="1702"/>
    </location>
</feature>
<feature type="region of interest" description="Disordered" evidence="4">
    <location>
        <begin position="36"/>
        <end position="97"/>
    </location>
</feature>
<feature type="region of interest" description="Disordered" evidence="4">
    <location>
        <begin position="1713"/>
        <end position="1737"/>
    </location>
</feature>
<feature type="short sequence motif" description="LPXTG sorting signal" evidence="3">
    <location>
        <begin position="1740"/>
        <end position="1744"/>
    </location>
</feature>
<feature type="compositionally biased region" description="Low complexity" evidence="4">
    <location>
        <begin position="36"/>
        <end position="50"/>
    </location>
</feature>
<feature type="compositionally biased region" description="Basic and acidic residues" evidence="4">
    <location>
        <begin position="58"/>
        <end position="85"/>
    </location>
</feature>
<feature type="modified residue" description="Pentaglycyl murein peptidoglycan amidated threonine" evidence="3">
    <location>
        <position position="1743"/>
    </location>
</feature>
<organism>
    <name type="scientific">Listeria monocytogenes serotype 4b (strain F2365)</name>
    <dbReference type="NCBI Taxonomy" id="265669"/>
    <lineage>
        <taxon>Bacteria</taxon>
        <taxon>Bacillati</taxon>
        <taxon>Bacillota</taxon>
        <taxon>Bacilli</taxon>
        <taxon>Bacillales</taxon>
        <taxon>Listeriaceae</taxon>
        <taxon>Listeria</taxon>
    </lineage>
</organism>
<name>INLI_LISMF</name>
<sequence length="1775" mass="191295">MKKKFSIVIISVLLLGYLAPFDTLLVGADETTVTEDTTVKTAETETATEATESESGSDNEKAEEPKEAEASKETTEKEEKAKTKEPASNIKTEINTDKSQLKQTNLKAVVPAGSTYNSLFPDDNLAKKLAVIITGNAAATGNESVDSAALLAISQLDLSGETGNDPTDISNIEGLQYLENLTSLNLSENNISDLAPIKDLVNLVSLNLSSNRTLVNLSGVEGLVNLQELNVSANKALEDISQVAALPVLKEISAQGCNIKTLELDNPAGAILPELETFYLQENDLTDLTSLAKLPKLKNLYIKGNASLKSLATLKGATKLQLIDASNCTDLETLGDISGLSELEMIQLSGCSKLKEITSLKDLPNLVNITADSCAIEDLGTLNNLPKLQTLILSDNKDLTNINAITDMPQLKTLALDGCGITSIGTLDNLPKLEKLDLKENQLTSISEINDLPRLSYLDVSVNYLTTIGELKKLPLLEWLNVSSNRLSDVSTLTNFPSLNYINVSNNVIRTVGKMTELPSLKEFYAQNNNVSDISMIHDMPNLRKVDASNNLITNIGTFDNLPKLQNLDVHSNRITNTSVIHDLPSLETFYAQNNLITNIGTMDNLPELTYVDLSFNRIPSLAPIGDLPKLEILKVTDNYSYLRSLGTMDGVSKLRNLELQNNYLNYTGTEGNLSALSDLTNLTELNLRDNGYISDISGLSTLSRLIYLNLDSNKIKDISALSNLTTLQELTLENNQIEDISALSDLDNLNKLALSKNKIIDISPAANMVNRGASVTASNQTYTLPTVLSYQSSFTIDNPVVWYDGTPLAPSSIAHSGTYKDGEITWTNMTAASSSTEFNFNRLKDGLTFSGTITQPYKSAVKVTANAEQTYTIGDTISEEQFLKDVNAKSSDGAPVTSDFATVVDLNTFGEYEVTLTSEKDGIQGDSCKVIVKVLHGAPVISADQTINYDKHATITEKQFLEDVHASTDLNTAITTNFSTAVNLNKGGDYTVALNSENEDGVKAETVYVTVTVDKDPAPIISAKTDITYDKFSKKTEAAFLDDIDADTNDGSIITSNFATAVNLDKAGDYTVTLNSINSDGVASTPTAIIVHVEKEKIATISANTAQQYEKYAEINETQFLKDVHASINASPTTAVLESDFETVVKLDVPGTYTVTITATNEDGGVSAPKEVSVIVKKLPAPEITADKEITYPKFDEVSEAEFLSDIHATINEKNVTITSNFSADVNLNKAGDYTVTLNATNEDGVKATPVEVIVHVQQGERPVITADATISYDKFANITEAKFLEDIHATSSDGQSSTVITSNFETATNFKTAMSYTVTLNAVNEDGISAEPVAVTVTINKEPAATLKADAEVSYAKNEAVTESDFFKDVHLEGAEAPSTAKATSNFDSVVDRSKTGDYTVTINATNEDGAVSTPIEVIVHIGAESAPVITANAEVKYNKHEQTDERRFLYDSDAKIDEANVEIKTDFAEKVDINKVGTYTVTLTATNEDGQAANPVEVSVIVSDAAAEKVNVKYVDENGAEISAAETLTGNLDDAFSIDAKSIAGYKCDATLSGVFSTVEQTVVFHYKAIEPGVVTIKYEDANGKAVAEDKQITGEVGDDFEAEAQTVSGYSCRAIASGKITEEPQTITFTYTTATPSKKSGEITVQYVDESGKKLADSKKVTGDIDDSYSVEAKAIDGYSVVGDDSAKGVFTEKSQTVTFKYKKNTQVSKDEPKVKGKTNQPPSADTKLKVDNNTLPATGDTENMALAVLIGFNMLLVASIFLFRKPKTNQ</sequence>
<proteinExistence type="inferred from homology"/>
<keyword id="KW-0134">Cell wall</keyword>
<keyword id="KW-0433">Leucine-rich repeat</keyword>
<keyword id="KW-0572">Peptidoglycan-anchor</keyword>
<keyword id="KW-0677">Repeat</keyword>
<keyword id="KW-0964">Secreted</keyword>
<keyword id="KW-0732">Signal</keyword>